<evidence type="ECO:0000255" key="1">
    <source>
        <dbReference type="HAMAP-Rule" id="MF_00163"/>
    </source>
</evidence>
<comment type="function">
    <text evidence="1">Removes the formyl group from the N-terminal Met of newly synthesized proteins. Requires at least a dipeptide for an efficient rate of reaction. N-terminal L-methionine is a prerequisite for activity but the enzyme has broad specificity at other positions.</text>
</comment>
<comment type="catalytic activity">
    <reaction evidence="1">
        <text>N-terminal N-formyl-L-methionyl-[peptide] + H2O = N-terminal L-methionyl-[peptide] + formate</text>
        <dbReference type="Rhea" id="RHEA:24420"/>
        <dbReference type="Rhea" id="RHEA-COMP:10639"/>
        <dbReference type="Rhea" id="RHEA-COMP:10640"/>
        <dbReference type="ChEBI" id="CHEBI:15377"/>
        <dbReference type="ChEBI" id="CHEBI:15740"/>
        <dbReference type="ChEBI" id="CHEBI:49298"/>
        <dbReference type="ChEBI" id="CHEBI:64731"/>
        <dbReference type="EC" id="3.5.1.88"/>
    </reaction>
</comment>
<comment type="cofactor">
    <cofactor evidence="1">
        <name>Fe(2+)</name>
        <dbReference type="ChEBI" id="CHEBI:29033"/>
    </cofactor>
    <text evidence="1">Binds 1 Fe(2+) ion.</text>
</comment>
<comment type="similarity">
    <text evidence="1">Belongs to the polypeptide deformylase family.</text>
</comment>
<accession>Q8REF0</accession>
<proteinExistence type="inferred from homology"/>
<name>DEF_FUSNN</name>
<keyword id="KW-0378">Hydrolase</keyword>
<keyword id="KW-0408">Iron</keyword>
<keyword id="KW-0479">Metal-binding</keyword>
<keyword id="KW-0648">Protein biosynthesis</keyword>
<keyword id="KW-1185">Reference proteome</keyword>
<sequence length="174" mass="19999">MVYKIKKYGEDVLKQIAKEVELSEINDEFRQFLDDMVETMYETDGVGLAAPQIGVSKRIFVCDDGNGVLRKVINPIIVPLTEETQEFEEGCLSVPGIYKKVERPKRVLLKYLNEYGKEVEEIAENFLAVVVQHENDHLDGILFIEKISPMAKRLIAKKLANIKKETKRIKEENE</sequence>
<organism>
    <name type="scientific">Fusobacterium nucleatum subsp. nucleatum (strain ATCC 25586 / DSM 15643 / BCRC 10681 / CIP 101130 / JCM 8532 / KCTC 2640 / LMG 13131 / VPI 4355)</name>
    <dbReference type="NCBI Taxonomy" id="190304"/>
    <lineage>
        <taxon>Bacteria</taxon>
        <taxon>Fusobacteriati</taxon>
        <taxon>Fusobacteriota</taxon>
        <taxon>Fusobacteriia</taxon>
        <taxon>Fusobacteriales</taxon>
        <taxon>Fusobacteriaceae</taxon>
        <taxon>Fusobacterium</taxon>
    </lineage>
</organism>
<protein>
    <recommendedName>
        <fullName evidence="1">Peptide deformylase</fullName>
        <shortName evidence="1">PDF</shortName>
        <ecNumber evidence="1">3.5.1.88</ecNumber>
    </recommendedName>
    <alternativeName>
        <fullName evidence="1">Polypeptide deformylase</fullName>
    </alternativeName>
</protein>
<reference key="1">
    <citation type="journal article" date="2002" name="J. Bacteriol.">
        <title>Genome sequence and analysis of the oral bacterium Fusobacterium nucleatum strain ATCC 25586.</title>
        <authorList>
            <person name="Kapatral V."/>
            <person name="Anderson I."/>
            <person name="Ivanova N."/>
            <person name="Reznik G."/>
            <person name="Los T."/>
            <person name="Lykidis A."/>
            <person name="Bhattacharyya A."/>
            <person name="Bartman A."/>
            <person name="Gardner W."/>
            <person name="Grechkin G."/>
            <person name="Zhu L."/>
            <person name="Vasieva O."/>
            <person name="Chu L."/>
            <person name="Kogan Y."/>
            <person name="Chaga O."/>
            <person name="Goltsman E."/>
            <person name="Bernal A."/>
            <person name="Larsen N."/>
            <person name="D'Souza M."/>
            <person name="Walunas T."/>
            <person name="Pusch G."/>
            <person name="Haselkorn R."/>
            <person name="Fonstein M."/>
            <person name="Kyrpides N.C."/>
            <person name="Overbeek R."/>
        </authorList>
    </citation>
    <scope>NUCLEOTIDE SEQUENCE [LARGE SCALE GENOMIC DNA]</scope>
    <source>
        <strain>ATCC 25586 / DSM 15643 / BCRC 10681 / CIP 101130 / JCM 8532 / KCTC 2640 / LMG 13131 / VPI 4355</strain>
    </source>
</reference>
<feature type="chain" id="PRO_0000082784" description="Peptide deformylase">
    <location>
        <begin position="1"/>
        <end position="174"/>
    </location>
</feature>
<feature type="active site" evidence="1">
    <location>
        <position position="134"/>
    </location>
</feature>
<feature type="binding site" evidence="1">
    <location>
        <position position="91"/>
    </location>
    <ligand>
        <name>Fe cation</name>
        <dbReference type="ChEBI" id="CHEBI:24875"/>
    </ligand>
</feature>
<feature type="binding site" evidence="1">
    <location>
        <position position="133"/>
    </location>
    <ligand>
        <name>Fe cation</name>
        <dbReference type="ChEBI" id="CHEBI:24875"/>
    </ligand>
</feature>
<feature type="binding site" evidence="1">
    <location>
        <position position="137"/>
    </location>
    <ligand>
        <name>Fe cation</name>
        <dbReference type="ChEBI" id="CHEBI:24875"/>
    </ligand>
</feature>
<dbReference type="EC" id="3.5.1.88" evidence="1"/>
<dbReference type="EMBL" id="AE009951">
    <property type="protein sequence ID" value="AAL95353.1"/>
    <property type="molecule type" value="Genomic_DNA"/>
</dbReference>
<dbReference type="RefSeq" id="NP_604054.1">
    <property type="nucleotide sequence ID" value="NC_003454.1"/>
</dbReference>
<dbReference type="RefSeq" id="WP_011016949.1">
    <property type="nucleotide sequence ID" value="NZ_OZ209243.1"/>
</dbReference>
<dbReference type="SMR" id="Q8REF0"/>
<dbReference type="FunCoup" id="Q8REF0">
    <property type="interactions" value="332"/>
</dbReference>
<dbReference type="STRING" id="190304.FN1157"/>
<dbReference type="PaxDb" id="190304-FN1157"/>
<dbReference type="EnsemblBacteria" id="AAL95353">
    <property type="protein sequence ID" value="AAL95353"/>
    <property type="gene ID" value="FN1157"/>
</dbReference>
<dbReference type="GeneID" id="79784137"/>
<dbReference type="KEGG" id="fnu:FN1157"/>
<dbReference type="PATRIC" id="fig|190304.8.peg.1722"/>
<dbReference type="eggNOG" id="COG0242">
    <property type="taxonomic scope" value="Bacteria"/>
</dbReference>
<dbReference type="HOGENOM" id="CLU_061901_4_2_0"/>
<dbReference type="InParanoid" id="Q8REF0"/>
<dbReference type="BioCyc" id="FNUC190304:G1FZS-1736-MONOMER"/>
<dbReference type="Proteomes" id="UP000002521">
    <property type="component" value="Chromosome"/>
</dbReference>
<dbReference type="GO" id="GO:0046872">
    <property type="term" value="F:metal ion binding"/>
    <property type="evidence" value="ECO:0007669"/>
    <property type="project" value="UniProtKB-KW"/>
</dbReference>
<dbReference type="GO" id="GO:0042586">
    <property type="term" value="F:peptide deformylase activity"/>
    <property type="evidence" value="ECO:0000318"/>
    <property type="project" value="GO_Central"/>
</dbReference>
<dbReference type="GO" id="GO:0043686">
    <property type="term" value="P:co-translational protein modification"/>
    <property type="evidence" value="ECO:0000318"/>
    <property type="project" value="GO_Central"/>
</dbReference>
<dbReference type="GO" id="GO:0006412">
    <property type="term" value="P:translation"/>
    <property type="evidence" value="ECO:0007669"/>
    <property type="project" value="UniProtKB-UniRule"/>
</dbReference>
<dbReference type="CDD" id="cd00487">
    <property type="entry name" value="Pep_deformylase"/>
    <property type="match status" value="1"/>
</dbReference>
<dbReference type="FunFam" id="3.90.45.10:FF:000013">
    <property type="entry name" value="Peptide deformylase"/>
    <property type="match status" value="1"/>
</dbReference>
<dbReference type="Gene3D" id="3.90.45.10">
    <property type="entry name" value="Peptide deformylase"/>
    <property type="match status" value="1"/>
</dbReference>
<dbReference type="HAMAP" id="MF_00163">
    <property type="entry name" value="Pep_deformylase"/>
    <property type="match status" value="1"/>
</dbReference>
<dbReference type="InterPro" id="IPR023635">
    <property type="entry name" value="Peptide_deformylase"/>
</dbReference>
<dbReference type="InterPro" id="IPR036821">
    <property type="entry name" value="Peptide_deformylase_sf"/>
</dbReference>
<dbReference type="NCBIfam" id="TIGR00079">
    <property type="entry name" value="pept_deformyl"/>
    <property type="match status" value="1"/>
</dbReference>
<dbReference type="NCBIfam" id="NF001159">
    <property type="entry name" value="PRK00150.1-3"/>
    <property type="match status" value="1"/>
</dbReference>
<dbReference type="PANTHER" id="PTHR10458">
    <property type="entry name" value="PEPTIDE DEFORMYLASE"/>
    <property type="match status" value="1"/>
</dbReference>
<dbReference type="PANTHER" id="PTHR10458:SF22">
    <property type="entry name" value="PEPTIDE DEFORMYLASE"/>
    <property type="match status" value="1"/>
</dbReference>
<dbReference type="Pfam" id="PF01327">
    <property type="entry name" value="Pep_deformylase"/>
    <property type="match status" value="1"/>
</dbReference>
<dbReference type="PIRSF" id="PIRSF004749">
    <property type="entry name" value="Pep_def"/>
    <property type="match status" value="1"/>
</dbReference>
<dbReference type="PRINTS" id="PR01576">
    <property type="entry name" value="PDEFORMYLASE"/>
</dbReference>
<dbReference type="SUPFAM" id="SSF56420">
    <property type="entry name" value="Peptide deformylase"/>
    <property type="match status" value="1"/>
</dbReference>
<gene>
    <name evidence="1" type="primary">def</name>
    <name type="ordered locus">FN1157</name>
</gene>